<dbReference type="EMBL" id="DQ885641">
    <property type="protein sequence ID" value="ABH12150.1"/>
    <property type="molecule type" value="mRNA"/>
</dbReference>
<dbReference type="RefSeq" id="XP_054326995.1">
    <property type="nucleotide sequence ID" value="XM_054471020.2"/>
</dbReference>
<dbReference type="SMR" id="Q0MQJ3"/>
<dbReference type="GeneID" id="129024020"/>
<dbReference type="GO" id="GO:0005743">
    <property type="term" value="C:mitochondrial inner membrane"/>
    <property type="evidence" value="ECO:0007669"/>
    <property type="project" value="UniProtKB-SubCell"/>
</dbReference>
<dbReference type="GO" id="GO:0045271">
    <property type="term" value="C:respiratory chain complex I"/>
    <property type="evidence" value="ECO:0000250"/>
    <property type="project" value="UniProtKB"/>
</dbReference>
<dbReference type="InterPro" id="IPR019329">
    <property type="entry name" value="NADH_UbQ_OxRdtase_ESSS_su"/>
</dbReference>
<dbReference type="PANTHER" id="PTHR13327:SF0">
    <property type="entry name" value="NADH DEHYDROGENASE [UBIQUINONE] 1 BETA SUBCOMPLEX SUBUNIT 11, MITOCHONDRIAL"/>
    <property type="match status" value="1"/>
</dbReference>
<dbReference type="PANTHER" id="PTHR13327">
    <property type="entry name" value="NADH-UBIQUINONE OXIDOREDUCTASE ESSS SUBUNIT, MITOCHONDRIAL PRECURSOR"/>
    <property type="match status" value="1"/>
</dbReference>
<dbReference type="Pfam" id="PF10183">
    <property type="entry name" value="ESSS"/>
    <property type="match status" value="1"/>
</dbReference>
<proteinExistence type="evidence at transcript level"/>
<sequence length="153" mass="17465">MAAGLFGLSARRLLAAAATRGLPAARVRWESSFSRTVVAPSAVARKRLPEPTTQWQEDLDPEDENLYEKNPDSHGYDKDPVLDVWNMRLVFFFGVSIILVLGSTFVAYLPDYRMKEWSRREAERLVKYREANGLPIMESNCFDPSKIQLPEDE</sequence>
<accession>Q0MQJ3</accession>
<protein>
    <recommendedName>
        <fullName>NADH dehydrogenase [ubiquinone] 1 beta subcomplex subunit 11, mitochondrial</fullName>
    </recommendedName>
    <alternativeName>
        <fullName>Complex I-ESSS</fullName>
        <shortName>CI-ESSS</shortName>
    </alternativeName>
    <alternativeName>
        <fullName>NADH-ubiquinone oxidoreductase ESSS subunit</fullName>
    </alternativeName>
</protein>
<name>NDUBB_PONPY</name>
<keyword id="KW-0249">Electron transport</keyword>
<keyword id="KW-0472">Membrane</keyword>
<keyword id="KW-0496">Mitochondrion</keyword>
<keyword id="KW-0999">Mitochondrion inner membrane</keyword>
<keyword id="KW-0679">Respiratory chain</keyword>
<keyword id="KW-0809">Transit peptide</keyword>
<keyword id="KW-0812">Transmembrane</keyword>
<keyword id="KW-1133">Transmembrane helix</keyword>
<keyword id="KW-0813">Transport</keyword>
<organism>
    <name type="scientific">Pongo pygmaeus</name>
    <name type="common">Bornean orangutan</name>
    <dbReference type="NCBI Taxonomy" id="9600"/>
    <lineage>
        <taxon>Eukaryota</taxon>
        <taxon>Metazoa</taxon>
        <taxon>Chordata</taxon>
        <taxon>Craniata</taxon>
        <taxon>Vertebrata</taxon>
        <taxon>Euteleostomi</taxon>
        <taxon>Mammalia</taxon>
        <taxon>Eutheria</taxon>
        <taxon>Euarchontoglires</taxon>
        <taxon>Primates</taxon>
        <taxon>Haplorrhini</taxon>
        <taxon>Catarrhini</taxon>
        <taxon>Hominidae</taxon>
        <taxon>Pongo</taxon>
    </lineage>
</organism>
<gene>
    <name type="primary">NDUFB11</name>
</gene>
<evidence type="ECO:0000250" key="1"/>
<evidence type="ECO:0000250" key="2">
    <source>
        <dbReference type="UniProtKB" id="Q9NX14"/>
    </source>
</evidence>
<evidence type="ECO:0000255" key="3"/>
<evidence type="ECO:0000256" key="4">
    <source>
        <dbReference type="SAM" id="MobiDB-lite"/>
    </source>
</evidence>
<evidence type="ECO:0000305" key="5"/>
<comment type="function">
    <text evidence="2">Accessory subunit of the mitochondrial membrane respiratory chain NADH dehydrogenase (Complex I), that is believed not to be involved in catalysis. Complex I functions in the transfer of electrons from NADH to the respiratory chain. The immediate electron acceptor for the enzyme is believed to be ubiquinone.</text>
</comment>
<comment type="subunit">
    <text evidence="2">Complex I is composed of 45 different subunits. Interacts with BCAP31.</text>
</comment>
<comment type="subcellular location">
    <subcellularLocation>
        <location evidence="2">Mitochondrion inner membrane</location>
        <topology evidence="2">Single-pass membrane protein</topology>
    </subcellularLocation>
    <text evidence="2">The interaction with BCAP31 mediates mitochondria localization.</text>
</comment>
<comment type="similarity">
    <text evidence="5">Belongs to the complex I NDUFB11 subunit family.</text>
</comment>
<reference key="1">
    <citation type="journal article" date="2006" name="Gene">
        <title>Adaptive selection of mitochondrial complex I subunits during primate radiation.</title>
        <authorList>
            <person name="Mishmar D."/>
            <person name="Ruiz-Pesini E."/>
            <person name="Mondragon-Palomino M."/>
            <person name="Procaccio V."/>
            <person name="Gaut B."/>
            <person name="Wallace D.C."/>
        </authorList>
    </citation>
    <scope>NUCLEOTIDE SEQUENCE [MRNA]</scope>
</reference>
<feature type="transit peptide" description="Mitochondrion" evidence="1">
    <location>
        <begin position="1"/>
        <end position="29"/>
    </location>
</feature>
<feature type="chain" id="PRO_0000251847" description="NADH dehydrogenase [ubiquinone] 1 beta subcomplex subunit 11, mitochondrial">
    <location>
        <begin position="30"/>
        <end position="153"/>
    </location>
</feature>
<feature type="transmembrane region" description="Helical" evidence="3">
    <location>
        <begin position="89"/>
        <end position="109"/>
    </location>
</feature>
<feature type="region of interest" description="Disordered" evidence="4">
    <location>
        <begin position="49"/>
        <end position="72"/>
    </location>
</feature>